<accession>Q1B860</accession>
<feature type="chain" id="PRO_1000056909" description="Malate synthase G">
    <location>
        <begin position="1"/>
        <end position="731"/>
    </location>
</feature>
<feature type="active site" description="Proton acceptor" evidence="1">
    <location>
        <position position="342"/>
    </location>
</feature>
<feature type="active site" description="Proton donor" evidence="1">
    <location>
        <position position="636"/>
    </location>
</feature>
<feature type="binding site" evidence="1">
    <location>
        <position position="118"/>
    </location>
    <ligand>
        <name>acetyl-CoA</name>
        <dbReference type="ChEBI" id="CHEBI:57288"/>
    </ligand>
</feature>
<feature type="binding site" evidence="1">
    <location>
        <begin position="125"/>
        <end position="126"/>
    </location>
    <ligand>
        <name>acetyl-CoA</name>
        <dbReference type="ChEBI" id="CHEBI:57288"/>
    </ligand>
</feature>
<feature type="binding site" evidence="1">
    <location>
        <position position="277"/>
    </location>
    <ligand>
        <name>acetyl-CoA</name>
        <dbReference type="ChEBI" id="CHEBI:57288"/>
    </ligand>
</feature>
<feature type="binding site" evidence="1">
    <location>
        <position position="314"/>
    </location>
    <ligand>
        <name>acetyl-CoA</name>
        <dbReference type="ChEBI" id="CHEBI:57288"/>
    </ligand>
</feature>
<feature type="binding site" evidence="1">
    <location>
        <position position="342"/>
    </location>
    <ligand>
        <name>glyoxylate</name>
        <dbReference type="ChEBI" id="CHEBI:36655"/>
    </ligand>
</feature>
<feature type="binding site" evidence="1">
    <location>
        <position position="437"/>
    </location>
    <ligand>
        <name>glyoxylate</name>
        <dbReference type="ChEBI" id="CHEBI:36655"/>
    </ligand>
</feature>
<feature type="binding site" evidence="1">
    <location>
        <position position="437"/>
    </location>
    <ligand>
        <name>Mg(2+)</name>
        <dbReference type="ChEBI" id="CHEBI:18420"/>
    </ligand>
</feature>
<feature type="binding site" evidence="1">
    <location>
        <begin position="462"/>
        <end position="465"/>
    </location>
    <ligand>
        <name>glyoxylate</name>
        <dbReference type="ChEBI" id="CHEBI:36655"/>
    </ligand>
</feature>
<feature type="binding site" evidence="1">
    <location>
        <position position="465"/>
    </location>
    <ligand>
        <name>Mg(2+)</name>
        <dbReference type="ChEBI" id="CHEBI:18420"/>
    </ligand>
</feature>
<feature type="binding site" evidence="1">
    <location>
        <position position="546"/>
    </location>
    <ligand>
        <name>acetyl-CoA</name>
        <dbReference type="ChEBI" id="CHEBI:57288"/>
    </ligand>
</feature>
<feature type="modified residue" description="Cysteine sulfenic acid (-SOH)" evidence="1">
    <location>
        <position position="622"/>
    </location>
</feature>
<gene>
    <name evidence="1" type="primary">glcB</name>
    <name type="ordered locus">Mmcs_2817</name>
</gene>
<comment type="function">
    <text evidence="1">Involved in the glycolate utilization. Catalyzes the condensation and subsequent hydrolysis of acetyl-coenzyme A (acetyl-CoA) and glyoxylate to form malate and CoA.</text>
</comment>
<comment type="catalytic activity">
    <reaction evidence="1">
        <text>glyoxylate + acetyl-CoA + H2O = (S)-malate + CoA + H(+)</text>
        <dbReference type="Rhea" id="RHEA:18181"/>
        <dbReference type="ChEBI" id="CHEBI:15377"/>
        <dbReference type="ChEBI" id="CHEBI:15378"/>
        <dbReference type="ChEBI" id="CHEBI:15589"/>
        <dbReference type="ChEBI" id="CHEBI:36655"/>
        <dbReference type="ChEBI" id="CHEBI:57287"/>
        <dbReference type="ChEBI" id="CHEBI:57288"/>
        <dbReference type="EC" id="2.3.3.9"/>
    </reaction>
</comment>
<comment type="cofactor">
    <cofactor evidence="1">
        <name>Mg(2+)</name>
        <dbReference type="ChEBI" id="CHEBI:18420"/>
    </cofactor>
</comment>
<comment type="pathway">
    <text evidence="1">Carbohydrate metabolism; glyoxylate cycle; (S)-malate from isocitrate: step 2/2.</text>
</comment>
<comment type="subunit">
    <text evidence="1">Monomer.</text>
</comment>
<comment type="subcellular location">
    <subcellularLocation>
        <location evidence="1">Cytoplasm</location>
    </subcellularLocation>
</comment>
<comment type="similarity">
    <text evidence="1">Belongs to the malate synthase family. GlcB subfamily.</text>
</comment>
<dbReference type="EC" id="2.3.3.9" evidence="1"/>
<dbReference type="EMBL" id="CP000384">
    <property type="protein sequence ID" value="ABG08924.1"/>
    <property type="molecule type" value="Genomic_DNA"/>
</dbReference>
<dbReference type="SMR" id="Q1B860"/>
<dbReference type="KEGG" id="mmc:Mmcs_2817"/>
<dbReference type="HOGENOM" id="CLU_028446_1_0_11"/>
<dbReference type="BioCyc" id="MSP164756:G1G6O-2871-MONOMER"/>
<dbReference type="UniPathway" id="UPA00703">
    <property type="reaction ID" value="UER00720"/>
</dbReference>
<dbReference type="GO" id="GO:0005829">
    <property type="term" value="C:cytosol"/>
    <property type="evidence" value="ECO:0007669"/>
    <property type="project" value="TreeGrafter"/>
</dbReference>
<dbReference type="GO" id="GO:0000287">
    <property type="term" value="F:magnesium ion binding"/>
    <property type="evidence" value="ECO:0007669"/>
    <property type="project" value="TreeGrafter"/>
</dbReference>
<dbReference type="GO" id="GO:0004474">
    <property type="term" value="F:malate synthase activity"/>
    <property type="evidence" value="ECO:0007669"/>
    <property type="project" value="UniProtKB-UniRule"/>
</dbReference>
<dbReference type="GO" id="GO:0009436">
    <property type="term" value="P:glyoxylate catabolic process"/>
    <property type="evidence" value="ECO:0007669"/>
    <property type="project" value="TreeGrafter"/>
</dbReference>
<dbReference type="GO" id="GO:0006097">
    <property type="term" value="P:glyoxylate cycle"/>
    <property type="evidence" value="ECO:0007669"/>
    <property type="project" value="UniProtKB-UniRule"/>
</dbReference>
<dbReference type="GO" id="GO:0006099">
    <property type="term" value="P:tricarboxylic acid cycle"/>
    <property type="evidence" value="ECO:0007669"/>
    <property type="project" value="UniProtKB-KW"/>
</dbReference>
<dbReference type="CDD" id="cd00728">
    <property type="entry name" value="malate_synt_G"/>
    <property type="match status" value="1"/>
</dbReference>
<dbReference type="FunFam" id="3.20.20.360:FF:000002">
    <property type="entry name" value="Malate synthase G"/>
    <property type="match status" value="1"/>
</dbReference>
<dbReference type="Gene3D" id="3.20.20.360">
    <property type="entry name" value="Malate synthase, domain 3"/>
    <property type="match status" value="2"/>
</dbReference>
<dbReference type="Gene3D" id="1.20.1220.12">
    <property type="entry name" value="Malate synthase, domain III"/>
    <property type="match status" value="1"/>
</dbReference>
<dbReference type="HAMAP" id="MF_00641">
    <property type="entry name" value="Malate_synth_G"/>
    <property type="match status" value="1"/>
</dbReference>
<dbReference type="InterPro" id="IPR044856">
    <property type="entry name" value="Malate_synth_C_sf"/>
</dbReference>
<dbReference type="InterPro" id="IPR011076">
    <property type="entry name" value="Malate_synth_sf"/>
</dbReference>
<dbReference type="InterPro" id="IPR001465">
    <property type="entry name" value="Malate_synthase_TIM"/>
</dbReference>
<dbReference type="InterPro" id="IPR006253">
    <property type="entry name" value="Malate_synthG"/>
</dbReference>
<dbReference type="InterPro" id="IPR048355">
    <property type="entry name" value="MS_C"/>
</dbReference>
<dbReference type="InterPro" id="IPR048356">
    <property type="entry name" value="MS_N"/>
</dbReference>
<dbReference type="InterPro" id="IPR046363">
    <property type="entry name" value="MS_N_TIM-barrel_dom"/>
</dbReference>
<dbReference type="InterPro" id="IPR048357">
    <property type="entry name" value="MSG_insertion"/>
</dbReference>
<dbReference type="NCBIfam" id="TIGR01345">
    <property type="entry name" value="malate_syn_G"/>
    <property type="match status" value="1"/>
</dbReference>
<dbReference type="NCBIfam" id="NF002825">
    <property type="entry name" value="PRK02999.1"/>
    <property type="match status" value="1"/>
</dbReference>
<dbReference type="PANTHER" id="PTHR42739">
    <property type="entry name" value="MALATE SYNTHASE G"/>
    <property type="match status" value="1"/>
</dbReference>
<dbReference type="PANTHER" id="PTHR42739:SF1">
    <property type="entry name" value="MALATE SYNTHASE G"/>
    <property type="match status" value="1"/>
</dbReference>
<dbReference type="Pfam" id="PF20659">
    <property type="entry name" value="MS_C"/>
    <property type="match status" value="1"/>
</dbReference>
<dbReference type="Pfam" id="PF20656">
    <property type="entry name" value="MS_N"/>
    <property type="match status" value="1"/>
</dbReference>
<dbReference type="Pfam" id="PF01274">
    <property type="entry name" value="MS_TIM-barrel"/>
    <property type="match status" value="1"/>
</dbReference>
<dbReference type="Pfam" id="PF20658">
    <property type="entry name" value="MSG_insertion"/>
    <property type="match status" value="1"/>
</dbReference>
<dbReference type="SUPFAM" id="SSF51645">
    <property type="entry name" value="Malate synthase G"/>
    <property type="match status" value="1"/>
</dbReference>
<evidence type="ECO:0000255" key="1">
    <source>
        <dbReference type="HAMAP-Rule" id="MF_00641"/>
    </source>
</evidence>
<proteinExistence type="inferred from homology"/>
<sequence>MTDRVTVGNLRVARALYDFITDEALAGTDLDPDSFWSGVDKVVADLTPRNQELLARRDDLQAQIDKWHRQRAIGPHDADEYKQFLTEIGYLEPDPGDFTITTAGVDDEITTTAGPQLVVPVLNARFALNAANARWGSLYDALYGTDVISEEDGAEKGTSYNRVRGDKVIAYAREFLDGAAPLASGSYADATGFRIEDGQVQVELGDDQWVGLADPDQFVGYTGELGSPQWSILLRNNGLHIEILIDPDSPVGSTDKAGVKDVVLESAVTTIMDFEDSVAAVDAEDKVLGYRNWLGLNRGDLSEEVSKGDKTFTRVLNPDRTYTTPDGSGELTLPGRSLLFVRNVGHLMTNDAITDAEGNEVFEGIQDALFTGLIAMHGLKESDANGPLRNSRTGSVYIVKPKMHGPAEVAYTVDLFSRVEDVLGLPQNTLKVGIMDEERRTTLNLKACIKAAADRVVFINTGFLDRTGDEIHTSMEAGPMIRKGAMKSQPWIKAYEDQNVDVGLATGFSGRAQIGKGMWAMTDLMADMVEQKIGQPKAGATTAWVPSPTAATLHAMHYHQVDVYAVHKELEGKQRASLDDLLTIPLAKELAWAPEEIREEVDNNCQSILGYVVRWIDAGVGCSKVPDIHDIALMEDRATLRISSQLLANWLRHGVITEEDVKTSLRRMAAVVDEQNAKDPDFKPMATDPDSSIAFQAAQELILAGGTQPSGYTEPILHRRRREYKASVAGA</sequence>
<name>MASZ_MYCSS</name>
<keyword id="KW-0963">Cytoplasm</keyword>
<keyword id="KW-0329">Glyoxylate bypass</keyword>
<keyword id="KW-0460">Magnesium</keyword>
<keyword id="KW-0479">Metal-binding</keyword>
<keyword id="KW-0558">Oxidation</keyword>
<keyword id="KW-0808">Transferase</keyword>
<keyword id="KW-0816">Tricarboxylic acid cycle</keyword>
<reference key="1">
    <citation type="submission" date="2006-06" db="EMBL/GenBank/DDBJ databases">
        <title>Complete sequence of chromosome of Mycobacterium sp. MCS.</title>
        <authorList>
            <consortium name="US DOE Joint Genome Institute"/>
            <person name="Copeland A."/>
            <person name="Lucas S."/>
            <person name="Lapidus A."/>
            <person name="Barry K."/>
            <person name="Detter J.C."/>
            <person name="Glavina del Rio T."/>
            <person name="Hammon N."/>
            <person name="Israni S."/>
            <person name="Dalin E."/>
            <person name="Tice H."/>
            <person name="Pitluck S."/>
            <person name="Martinez M."/>
            <person name="Schmutz J."/>
            <person name="Larimer F."/>
            <person name="Land M."/>
            <person name="Hauser L."/>
            <person name="Kyrpides N."/>
            <person name="Kim E."/>
            <person name="Miller C.D."/>
            <person name="Hughes J.E."/>
            <person name="Anderson A.J."/>
            <person name="Sims R.C."/>
            <person name="Richardson P."/>
        </authorList>
    </citation>
    <scope>NUCLEOTIDE SEQUENCE [LARGE SCALE GENOMIC DNA]</scope>
    <source>
        <strain>MCS</strain>
    </source>
</reference>
<protein>
    <recommendedName>
        <fullName evidence="1">Malate synthase G</fullName>
        <ecNumber evidence="1">2.3.3.9</ecNumber>
    </recommendedName>
</protein>
<organism>
    <name type="scientific">Mycobacterium sp. (strain MCS)</name>
    <dbReference type="NCBI Taxonomy" id="164756"/>
    <lineage>
        <taxon>Bacteria</taxon>
        <taxon>Bacillati</taxon>
        <taxon>Actinomycetota</taxon>
        <taxon>Actinomycetes</taxon>
        <taxon>Mycobacteriales</taxon>
        <taxon>Mycobacteriaceae</taxon>
        <taxon>Mycobacterium</taxon>
    </lineage>
</organism>